<reference key="1">
    <citation type="journal article" date="2003" name="Nature">
        <title>Genome sequence of Bacillus cereus and comparative analysis with Bacillus anthracis.</title>
        <authorList>
            <person name="Ivanova N."/>
            <person name="Sorokin A."/>
            <person name="Anderson I."/>
            <person name="Galleron N."/>
            <person name="Candelon B."/>
            <person name="Kapatral V."/>
            <person name="Bhattacharyya A."/>
            <person name="Reznik G."/>
            <person name="Mikhailova N."/>
            <person name="Lapidus A."/>
            <person name="Chu L."/>
            <person name="Mazur M."/>
            <person name="Goltsman E."/>
            <person name="Larsen N."/>
            <person name="D'Souza M."/>
            <person name="Walunas T."/>
            <person name="Grechkin Y."/>
            <person name="Pusch G."/>
            <person name="Haselkorn R."/>
            <person name="Fonstein M."/>
            <person name="Ehrlich S.D."/>
            <person name="Overbeek R."/>
            <person name="Kyrpides N.C."/>
        </authorList>
    </citation>
    <scope>NUCLEOTIDE SEQUENCE [LARGE SCALE GENOMIC DNA]</scope>
    <source>
        <strain>ATCC 14579 / DSM 31 / CCUG 7414 / JCM 2152 / NBRC 15305 / NCIMB 9373 / NCTC 2599 / NRRL B-3711</strain>
    </source>
</reference>
<gene>
    <name evidence="1" type="primary">lexA</name>
    <name type="ordered locus">BC_3690</name>
</gene>
<proteinExistence type="inferred from homology"/>
<keyword id="KW-0068">Autocatalytic cleavage</keyword>
<keyword id="KW-0227">DNA damage</keyword>
<keyword id="KW-0234">DNA repair</keyword>
<keyword id="KW-0235">DNA replication</keyword>
<keyword id="KW-0238">DNA-binding</keyword>
<keyword id="KW-0378">Hydrolase</keyword>
<keyword id="KW-1185">Reference proteome</keyword>
<keyword id="KW-0678">Repressor</keyword>
<keyword id="KW-0742">SOS response</keyword>
<keyword id="KW-0804">Transcription</keyword>
<keyword id="KW-0805">Transcription regulation</keyword>
<feature type="chain" id="PRO_0000170004" description="LexA repressor">
    <location>
        <begin position="1"/>
        <end position="206"/>
    </location>
</feature>
<feature type="DNA-binding region" description="H-T-H motif" evidence="1">
    <location>
        <begin position="28"/>
        <end position="48"/>
    </location>
</feature>
<feature type="active site" description="For autocatalytic cleavage activity" evidence="1">
    <location>
        <position position="128"/>
    </location>
</feature>
<feature type="active site" description="For autocatalytic cleavage activity" evidence="1">
    <location>
        <position position="166"/>
    </location>
</feature>
<feature type="site" description="Cleavage; by autolysis" evidence="1">
    <location>
        <begin position="92"/>
        <end position="93"/>
    </location>
</feature>
<name>LEXA_BACCR</name>
<dbReference type="EC" id="3.4.21.88" evidence="1"/>
<dbReference type="EMBL" id="AE016877">
    <property type="protein sequence ID" value="AAP10619.1"/>
    <property type="status" value="ALT_INIT"/>
    <property type="molecule type" value="Genomic_DNA"/>
</dbReference>
<dbReference type="RefSeq" id="NP_833418.1">
    <property type="nucleotide sequence ID" value="NC_004722.1"/>
</dbReference>
<dbReference type="RefSeq" id="WP_000413738.1">
    <property type="nucleotide sequence ID" value="NZ_CP138336.1"/>
</dbReference>
<dbReference type="SMR" id="Q81A92"/>
<dbReference type="STRING" id="226900.BC_3690"/>
<dbReference type="MEROPS" id="S24.001"/>
<dbReference type="GeneID" id="93007490"/>
<dbReference type="KEGG" id="bce:BC3690"/>
<dbReference type="PATRIC" id="fig|226900.8.peg.3795"/>
<dbReference type="HOGENOM" id="CLU_066192_45_1_9"/>
<dbReference type="OrthoDB" id="9802364at2"/>
<dbReference type="Proteomes" id="UP000001417">
    <property type="component" value="Chromosome"/>
</dbReference>
<dbReference type="GO" id="GO:0032993">
    <property type="term" value="C:protein-DNA complex"/>
    <property type="evidence" value="ECO:0000318"/>
    <property type="project" value="GO_Central"/>
</dbReference>
<dbReference type="GO" id="GO:0001217">
    <property type="term" value="F:DNA-binding transcription repressor activity"/>
    <property type="evidence" value="ECO:0000318"/>
    <property type="project" value="GO_Central"/>
</dbReference>
<dbReference type="GO" id="GO:0043565">
    <property type="term" value="F:sequence-specific DNA binding"/>
    <property type="evidence" value="ECO:0000318"/>
    <property type="project" value="GO_Central"/>
</dbReference>
<dbReference type="GO" id="GO:0004252">
    <property type="term" value="F:serine-type endopeptidase activity"/>
    <property type="evidence" value="ECO:0007669"/>
    <property type="project" value="UniProtKB-UniRule"/>
</dbReference>
<dbReference type="GO" id="GO:0006281">
    <property type="term" value="P:DNA repair"/>
    <property type="evidence" value="ECO:0007669"/>
    <property type="project" value="UniProtKB-UniRule"/>
</dbReference>
<dbReference type="GO" id="GO:0006260">
    <property type="term" value="P:DNA replication"/>
    <property type="evidence" value="ECO:0007669"/>
    <property type="project" value="UniProtKB-UniRule"/>
</dbReference>
<dbReference type="GO" id="GO:0045892">
    <property type="term" value="P:negative regulation of DNA-templated transcription"/>
    <property type="evidence" value="ECO:0000318"/>
    <property type="project" value="GO_Central"/>
</dbReference>
<dbReference type="GO" id="GO:0006508">
    <property type="term" value="P:proteolysis"/>
    <property type="evidence" value="ECO:0007669"/>
    <property type="project" value="InterPro"/>
</dbReference>
<dbReference type="GO" id="GO:0009432">
    <property type="term" value="P:SOS response"/>
    <property type="evidence" value="ECO:0000318"/>
    <property type="project" value="GO_Central"/>
</dbReference>
<dbReference type="CDD" id="cd00090">
    <property type="entry name" value="HTH_ARSR"/>
    <property type="match status" value="1"/>
</dbReference>
<dbReference type="CDD" id="cd06529">
    <property type="entry name" value="S24_LexA-like"/>
    <property type="match status" value="1"/>
</dbReference>
<dbReference type="FunFam" id="1.10.10.10:FF:000009">
    <property type="entry name" value="LexA repressor"/>
    <property type="match status" value="1"/>
</dbReference>
<dbReference type="FunFam" id="2.10.109.10:FF:000001">
    <property type="entry name" value="LexA repressor"/>
    <property type="match status" value="1"/>
</dbReference>
<dbReference type="Gene3D" id="2.10.109.10">
    <property type="entry name" value="Umud Fragment, subunit A"/>
    <property type="match status" value="1"/>
</dbReference>
<dbReference type="Gene3D" id="1.10.10.10">
    <property type="entry name" value="Winged helix-like DNA-binding domain superfamily/Winged helix DNA-binding domain"/>
    <property type="match status" value="1"/>
</dbReference>
<dbReference type="HAMAP" id="MF_00015">
    <property type="entry name" value="LexA"/>
    <property type="match status" value="1"/>
</dbReference>
<dbReference type="InterPro" id="IPR011991">
    <property type="entry name" value="ArsR-like_HTH"/>
</dbReference>
<dbReference type="InterPro" id="IPR006200">
    <property type="entry name" value="LexA"/>
</dbReference>
<dbReference type="InterPro" id="IPR039418">
    <property type="entry name" value="LexA-like"/>
</dbReference>
<dbReference type="InterPro" id="IPR036286">
    <property type="entry name" value="LexA/Signal_pep-like_sf"/>
</dbReference>
<dbReference type="InterPro" id="IPR006199">
    <property type="entry name" value="LexA_DNA-bd_dom"/>
</dbReference>
<dbReference type="InterPro" id="IPR050077">
    <property type="entry name" value="LexA_repressor"/>
</dbReference>
<dbReference type="InterPro" id="IPR006197">
    <property type="entry name" value="Peptidase_S24_LexA"/>
</dbReference>
<dbReference type="InterPro" id="IPR015927">
    <property type="entry name" value="Peptidase_S24_S26A/B/C"/>
</dbReference>
<dbReference type="InterPro" id="IPR036388">
    <property type="entry name" value="WH-like_DNA-bd_sf"/>
</dbReference>
<dbReference type="InterPro" id="IPR036390">
    <property type="entry name" value="WH_DNA-bd_sf"/>
</dbReference>
<dbReference type="NCBIfam" id="TIGR00498">
    <property type="entry name" value="lexA"/>
    <property type="match status" value="1"/>
</dbReference>
<dbReference type="PANTHER" id="PTHR33516">
    <property type="entry name" value="LEXA REPRESSOR"/>
    <property type="match status" value="1"/>
</dbReference>
<dbReference type="PANTHER" id="PTHR33516:SF2">
    <property type="entry name" value="LEXA REPRESSOR-RELATED"/>
    <property type="match status" value="1"/>
</dbReference>
<dbReference type="Pfam" id="PF01726">
    <property type="entry name" value="LexA_DNA_bind"/>
    <property type="match status" value="1"/>
</dbReference>
<dbReference type="Pfam" id="PF00717">
    <property type="entry name" value="Peptidase_S24"/>
    <property type="match status" value="1"/>
</dbReference>
<dbReference type="PRINTS" id="PR00726">
    <property type="entry name" value="LEXASERPTASE"/>
</dbReference>
<dbReference type="SUPFAM" id="SSF51306">
    <property type="entry name" value="LexA/Signal peptidase"/>
    <property type="match status" value="1"/>
</dbReference>
<dbReference type="SUPFAM" id="SSF46785">
    <property type="entry name" value="Winged helix' DNA-binding domain"/>
    <property type="match status" value="1"/>
</dbReference>
<sequence length="206" mass="22890">MEKLTKRQQDILDFIKLKVQEKGYPPSVREIGQAVGLASSSTVHGHLSRLEEKGYIRRDPTKPRAIEILGEDRMDTETQSVIQVPIVGKVTAGLPITAVESVEEHFPLPASIVAGADQVFMLRISGDSMIEAGIFDGDLVVVRQQQSAYNGEIVVALTEDNEATVKRFYKEKDHFRLQPENSSLEPIILKQVSVIGKVIGVYRDLH</sequence>
<comment type="function">
    <text evidence="1">Represses a number of genes involved in the response to DNA damage (SOS response), including recA and lexA. In the presence of single-stranded DNA, RecA interacts with LexA causing an autocatalytic cleavage which disrupts the DNA-binding part of LexA, leading to derepression of the SOS regulon and eventually DNA repair.</text>
</comment>
<comment type="catalytic activity">
    <reaction evidence="1">
        <text>Hydrolysis of Ala-|-Gly bond in repressor LexA.</text>
        <dbReference type="EC" id="3.4.21.88"/>
    </reaction>
</comment>
<comment type="subunit">
    <text evidence="1">Homodimer.</text>
</comment>
<comment type="similarity">
    <text evidence="1">Belongs to the peptidase S24 family.</text>
</comment>
<comment type="sequence caution" evidence="2">
    <conflict type="erroneous initiation">
        <sequence resource="EMBL-CDS" id="AAP10619"/>
    </conflict>
</comment>
<protein>
    <recommendedName>
        <fullName evidence="1">LexA repressor</fullName>
        <ecNumber evidence="1">3.4.21.88</ecNumber>
    </recommendedName>
</protein>
<organism>
    <name type="scientific">Bacillus cereus (strain ATCC 14579 / DSM 31 / CCUG 7414 / JCM 2152 / NBRC 15305 / NCIMB 9373 / NCTC 2599 / NRRL B-3711)</name>
    <dbReference type="NCBI Taxonomy" id="226900"/>
    <lineage>
        <taxon>Bacteria</taxon>
        <taxon>Bacillati</taxon>
        <taxon>Bacillota</taxon>
        <taxon>Bacilli</taxon>
        <taxon>Bacillales</taxon>
        <taxon>Bacillaceae</taxon>
        <taxon>Bacillus</taxon>
        <taxon>Bacillus cereus group</taxon>
    </lineage>
</organism>
<accession>Q81A92</accession>
<evidence type="ECO:0000255" key="1">
    <source>
        <dbReference type="HAMAP-Rule" id="MF_00015"/>
    </source>
</evidence>
<evidence type="ECO:0000305" key="2"/>